<reference key="1">
    <citation type="journal article" date="2001" name="Science">
        <title>Complete genome sequence of a virulent isolate of Streptococcus pneumoniae.</title>
        <authorList>
            <person name="Tettelin H."/>
            <person name="Nelson K.E."/>
            <person name="Paulsen I.T."/>
            <person name="Eisen J.A."/>
            <person name="Read T.D."/>
            <person name="Peterson S.N."/>
            <person name="Heidelberg J.F."/>
            <person name="DeBoy R.T."/>
            <person name="Haft D.H."/>
            <person name="Dodson R.J."/>
            <person name="Durkin A.S."/>
            <person name="Gwinn M.L."/>
            <person name="Kolonay J.F."/>
            <person name="Nelson W.C."/>
            <person name="Peterson J.D."/>
            <person name="Umayam L.A."/>
            <person name="White O."/>
            <person name="Salzberg S.L."/>
            <person name="Lewis M.R."/>
            <person name="Radune D."/>
            <person name="Holtzapple E.K."/>
            <person name="Khouri H.M."/>
            <person name="Wolf A.M."/>
            <person name="Utterback T.R."/>
            <person name="Hansen C.L."/>
            <person name="McDonald L.A."/>
            <person name="Feldblyum T.V."/>
            <person name="Angiuoli S.V."/>
            <person name="Dickinson T."/>
            <person name="Hickey E.K."/>
            <person name="Holt I.E."/>
            <person name="Loftus B.J."/>
            <person name="Yang F."/>
            <person name="Smith H.O."/>
            <person name="Venter J.C."/>
            <person name="Dougherty B.A."/>
            <person name="Morrison D.A."/>
            <person name="Hollingshead S.K."/>
            <person name="Fraser C.M."/>
        </authorList>
    </citation>
    <scope>NUCLEOTIDE SEQUENCE [LARGE SCALE GENOMIC DNA]</scope>
    <source>
        <strain>ATCC BAA-334 / TIGR4</strain>
    </source>
</reference>
<reference key="2">
    <citation type="journal article" date="2004" name="Microbiology">
        <title>rexAB mutants in Streptococcus pneumoniae.</title>
        <authorList>
            <person name="Halpern D."/>
            <person name="Gruss A."/>
            <person name="Claverys J.-P."/>
            <person name="El-Karoui M."/>
        </authorList>
    </citation>
    <scope>FUNCTION</scope>
    <scope>DISRUPTION PHENOTYPE</scope>
    <source>
        <strain>R6 / R800</strain>
    </source>
</reference>
<evidence type="ECO:0000255" key="1">
    <source>
        <dbReference type="HAMAP-Rule" id="MF_01453"/>
    </source>
</evidence>
<evidence type="ECO:0000269" key="2">
    <source>
    </source>
</evidence>
<evidence type="ECO:0000303" key="3">
    <source>
    </source>
</evidence>
<evidence type="ECO:0000305" key="4">
    <source>
    </source>
</evidence>
<keyword id="KW-0067">ATP-binding</keyword>
<keyword id="KW-0227">DNA damage</keyword>
<keyword id="KW-0234">DNA repair</keyword>
<keyword id="KW-0238">DNA-binding</keyword>
<keyword id="KW-0269">Exonuclease</keyword>
<keyword id="KW-0347">Helicase</keyword>
<keyword id="KW-0378">Hydrolase</keyword>
<keyword id="KW-0540">Nuclease</keyword>
<keyword id="KW-0547">Nucleotide-binding</keyword>
<keyword id="KW-1185">Reference proteome</keyword>
<dbReference type="EC" id="3.1.-.-" evidence="1"/>
<dbReference type="EMBL" id="AE005672">
    <property type="protein sequence ID" value="AAK75260.1"/>
    <property type="molecule type" value="Genomic_DNA"/>
</dbReference>
<dbReference type="PIR" id="C95133">
    <property type="entry name" value="C95133"/>
</dbReference>
<dbReference type="PIR" id="G98001">
    <property type="entry name" value="G98001"/>
</dbReference>
<dbReference type="RefSeq" id="WP_000772372.1">
    <property type="nucleotide sequence ID" value="NZ_CP155539.1"/>
</dbReference>
<dbReference type="SMR" id="Q97QQ0"/>
<dbReference type="PaxDb" id="170187-SP_1151"/>
<dbReference type="EnsemblBacteria" id="AAK75260">
    <property type="protein sequence ID" value="AAK75260"/>
    <property type="gene ID" value="SP_1151"/>
</dbReference>
<dbReference type="KEGG" id="spn:SP_1151"/>
<dbReference type="eggNOG" id="COG3857">
    <property type="taxonomic scope" value="Bacteria"/>
</dbReference>
<dbReference type="PhylomeDB" id="Q97QQ0"/>
<dbReference type="BioCyc" id="SPNE170187:G1FZB-1170-MONOMER"/>
<dbReference type="Proteomes" id="UP000000585">
    <property type="component" value="Chromosome"/>
</dbReference>
<dbReference type="GO" id="GO:0008409">
    <property type="term" value="F:5'-3' exonuclease activity"/>
    <property type="evidence" value="ECO:0007669"/>
    <property type="project" value="UniProtKB-UniRule"/>
</dbReference>
<dbReference type="GO" id="GO:0005524">
    <property type="term" value="F:ATP binding"/>
    <property type="evidence" value="ECO:0007669"/>
    <property type="project" value="UniProtKB-UniRule"/>
</dbReference>
<dbReference type="GO" id="GO:0003690">
    <property type="term" value="F:double-stranded DNA binding"/>
    <property type="evidence" value="ECO:0007669"/>
    <property type="project" value="UniProtKB-UniRule"/>
</dbReference>
<dbReference type="GO" id="GO:0004386">
    <property type="term" value="F:helicase activity"/>
    <property type="evidence" value="ECO:0007669"/>
    <property type="project" value="UniProtKB-KW"/>
</dbReference>
<dbReference type="GO" id="GO:0016817">
    <property type="term" value="F:hydrolase activity, acting on acid anhydrides"/>
    <property type="evidence" value="ECO:0007669"/>
    <property type="project" value="InterPro"/>
</dbReference>
<dbReference type="GO" id="GO:0000724">
    <property type="term" value="P:double-strand break repair via homologous recombination"/>
    <property type="evidence" value="ECO:0007669"/>
    <property type="project" value="UniProtKB-UniRule"/>
</dbReference>
<dbReference type="FunFam" id="3.40.50.300:FF:002666">
    <property type="entry name" value="ATP-dependent helicase/deoxyribonuclease subunit B"/>
    <property type="match status" value="1"/>
</dbReference>
<dbReference type="FunFam" id="3.40.50.300:FF:002815">
    <property type="entry name" value="ATP-dependent helicase/deoxyribonuclease subunit B"/>
    <property type="match status" value="1"/>
</dbReference>
<dbReference type="Gene3D" id="3.40.50.300">
    <property type="entry name" value="P-loop containing nucleotide triphosphate hydrolases"/>
    <property type="match status" value="4"/>
</dbReference>
<dbReference type="HAMAP" id="MF_01453">
    <property type="entry name" value="AddB_type2"/>
    <property type="match status" value="1"/>
</dbReference>
<dbReference type="InterPro" id="IPR049035">
    <property type="entry name" value="ADDB_N"/>
</dbReference>
<dbReference type="InterPro" id="IPR014141">
    <property type="entry name" value="DNA_helicase_suRexB"/>
</dbReference>
<dbReference type="InterPro" id="IPR027417">
    <property type="entry name" value="P-loop_NTPase"/>
</dbReference>
<dbReference type="InterPro" id="IPR038726">
    <property type="entry name" value="PDDEXK_AddAB-type"/>
</dbReference>
<dbReference type="InterPro" id="IPR011335">
    <property type="entry name" value="Restrct_endonuc-II-like"/>
</dbReference>
<dbReference type="NCBIfam" id="TIGR02774">
    <property type="entry name" value="rexB_recomb"/>
    <property type="match status" value="1"/>
</dbReference>
<dbReference type="PANTHER" id="PTHR30591">
    <property type="entry name" value="RECBCD ENZYME SUBUNIT RECC"/>
    <property type="match status" value="1"/>
</dbReference>
<dbReference type="PANTHER" id="PTHR30591:SF1">
    <property type="entry name" value="RECBCD ENZYME SUBUNIT RECC"/>
    <property type="match status" value="1"/>
</dbReference>
<dbReference type="Pfam" id="PF21445">
    <property type="entry name" value="ADDB_N"/>
    <property type="match status" value="1"/>
</dbReference>
<dbReference type="Pfam" id="PF12705">
    <property type="entry name" value="PDDEXK_1"/>
    <property type="match status" value="1"/>
</dbReference>
<dbReference type="SUPFAM" id="SSF52540">
    <property type="entry name" value="P-loop containing nucleoside triphosphate hydrolases"/>
    <property type="match status" value="1"/>
</dbReference>
<dbReference type="SUPFAM" id="SSF52980">
    <property type="entry name" value="Restriction endonuclease-like"/>
    <property type="match status" value="1"/>
</dbReference>
<protein>
    <recommendedName>
        <fullName evidence="3">Exonuclease/helicase subunit RexB</fullName>
        <ecNumber evidence="1">3.1.-.-</ecNumber>
    </recommendedName>
    <alternativeName>
        <fullName evidence="1">ATP-dependent helicase/deoxyribonuclease subunit B</fullName>
    </alternativeName>
    <alternativeName>
        <fullName evidence="1">ATP-dependent helicase/nuclease subunit RexB</fullName>
    </alternativeName>
</protein>
<sequence length="1091" mass="124854">MKLLYTDIRTSLTEILTREAEELVAAGKRVFYIAPNSLSFEKERAVLEYLSQQASFSITVTRFAQMARYLVLNDLPAKTTLDDIGLGLAFYKCLAELDPKDLRVYGAIKQDPQLIQQLIELYHEMTKSQMSFLDLENLTDEDKRADLLLIFEKVTAYLNQGQLAQESQLSHLIEAIENDKVSSDFNQIALVIDGFTRFSAEEERVVDLLHGKGVEIVIGAYASKKAYTSPFSEGNLYQASVKFLHHLASKYQTPAQDCSQTHEKMDSFDKASRLLESSYDFSELALDVDEKDRENLQIWSCLTQKEELELVARSIRQKLHENSDLSYKHFRILLGDVASYQLSLKTIFDQYQIPFYLGRSEAMAHHPLTQFVESILALKRYRFRQEDLINLLRTDLYTDLSQSDIDAFEQYIRYLGINGLPAFQQTFTKSHHGKFNLERLNVLRLRILAPLETLFASRKQKAEKLLQKWSVFLKEGAVTKQLQDLTTTLEAVEQERQAEVWKAFCHVLEQFATVFAGSQVSLEDFLALLHSGMSLSQYRTIPATVDTVLVQSYDLIAPLTADFVYAIGLTQDNLPKISQNTSLLTDEERQNLNQATEEGVQLLIASSENLKKNRYTMLSLVNSARKQLFLSAPSLFNESESKESAYLQELIHFGFRRREKRMNHKGLSKEDMGSYHSLLSSLVAYHQQGEMSDTEQDLTFVKVLSRVIGKKLDQQGLENPAIPTSPSSKTLAKDTLQALYPAKQEFYLSTSGLTEFYRNEYSYFLRYVLGLQEELRLHPDARSHGNFLHRIFERALQLPNEDSFDQRLEQAIQETSQEREFEAIYQESLEAQFTKEVLLDVARTTGHILRHNPAIETIKEEANFGGKDQAFIQLDNGRSVFVRGKVDRIDRLKANGAIGVVDYKSSLTQFQFPHFFNGLNSQLPTYLAALKREGEQNFFGAMYLEMAEPVQSLMAVKSLAGAVVEASKSMKYQGLFLEKESSYLGEFYNKNKANQLTDEEFQLLLDYNAYLYKKAAEKILAGRFAINPYTENGRSIAPYVQQHQAITGFEANYHLGQARFLEKLDLADGKRLVGEKLKQAWLEKIREELNR</sequence>
<organism>
    <name type="scientific">Streptococcus pneumoniae serotype 4 (strain ATCC BAA-334 / TIGR4)</name>
    <dbReference type="NCBI Taxonomy" id="170187"/>
    <lineage>
        <taxon>Bacteria</taxon>
        <taxon>Bacillati</taxon>
        <taxon>Bacillota</taxon>
        <taxon>Bacilli</taxon>
        <taxon>Lactobacillales</taxon>
        <taxon>Streptococcaceae</taxon>
        <taxon>Streptococcus</taxon>
    </lineage>
</organism>
<name>ADDB_STRPN</name>
<accession>Q97QQ0</accession>
<proteinExistence type="inferred from homology"/>
<comment type="function">
    <text evidence="2">Involved in DNA double-strand break repair. Is not involved in recombination during natural competence or in plasmid establishment.</text>
</comment>
<comment type="function">
    <text evidence="1">The heterodimer acts as both an ATP-dependent DNA helicase and an ATP-dependent, dual-direction single-stranded exonuclease. Recognizes the chi site generating a DNA molecule suitable for the initiation of homologous recombination. This subunit has 5' -&gt; 3' nuclease activity but not helicase activity.</text>
</comment>
<comment type="cofactor">
    <cofactor evidence="1">
        <name>Mg(2+)</name>
        <dbReference type="ChEBI" id="CHEBI:18420"/>
    </cofactor>
</comment>
<comment type="subunit">
    <text evidence="4">Heterodimer of RexA (AddA) and RexB.</text>
</comment>
<comment type="disruption phenotype">
    <text evidence="2">Cells lacking this gene grow poorly, are more sensitive to UV light than wild-type cells and have reduced double-strand exonuclease activity.</text>
</comment>
<comment type="miscellaneous">
    <text evidence="1">Despite having helicase-like domains, this subunit does not have helicase activity.</text>
</comment>
<comment type="similarity">
    <text evidence="1">Belongs to the helicase family. AddB/RexB type 2 subfamily.</text>
</comment>
<gene>
    <name evidence="1 3" type="primary">rexB</name>
    <name type="ordered locus">SP_1151</name>
</gene>
<feature type="chain" id="PRO_0000379394" description="Exonuclease/helicase subunit RexB">
    <location>
        <begin position="1"/>
        <end position="1091"/>
    </location>
</feature>